<protein>
    <recommendedName>
        <fullName evidence="1">5-deoxyribose 1-phosphate isomerase</fullName>
        <ecNumber evidence="1">5.3.1.-</ecNumber>
    </recommendedName>
</protein>
<organism>
    <name type="scientific">Bacillus thuringiensis (strain Al Hakam)</name>
    <dbReference type="NCBI Taxonomy" id="412694"/>
    <lineage>
        <taxon>Bacteria</taxon>
        <taxon>Bacillati</taxon>
        <taxon>Bacillota</taxon>
        <taxon>Bacilli</taxon>
        <taxon>Bacillales</taxon>
        <taxon>Bacillaceae</taxon>
        <taxon>Bacillus</taxon>
        <taxon>Bacillus cereus group</taxon>
    </lineage>
</organism>
<name>DRDI_BACAH</name>
<feature type="chain" id="PRO_0000357151" description="5-deoxyribose 1-phosphate isomerase">
    <location>
        <begin position="1"/>
        <end position="347"/>
    </location>
</feature>
<feature type="active site" description="Proton donor" evidence="1">
    <location>
        <position position="239"/>
    </location>
</feature>
<feature type="binding site" evidence="1">
    <location>
        <begin position="48"/>
        <end position="50"/>
    </location>
    <ligand>
        <name>substrate</name>
    </ligand>
</feature>
<feature type="binding site" evidence="1">
    <location>
        <position position="91"/>
    </location>
    <ligand>
        <name>substrate</name>
    </ligand>
</feature>
<feature type="binding site" evidence="1">
    <location>
        <position position="198"/>
    </location>
    <ligand>
        <name>substrate</name>
    </ligand>
</feature>
<feature type="binding site" evidence="1">
    <location>
        <begin position="249"/>
        <end position="250"/>
    </location>
    <ligand>
        <name>substrate</name>
    </ligand>
</feature>
<feature type="site" description="Transition state stabilizer" evidence="1">
    <location>
        <position position="159"/>
    </location>
</feature>
<gene>
    <name evidence="1" type="primary">drdI</name>
    <name type="ordered locus">BALH_0338</name>
</gene>
<proteinExistence type="inferred from homology"/>
<keyword id="KW-0119">Carbohydrate metabolism</keyword>
<keyword id="KW-0413">Isomerase</keyword>
<evidence type="ECO:0000255" key="1">
    <source>
        <dbReference type="HAMAP-Rule" id="MF_02229"/>
    </source>
</evidence>
<evidence type="ECO:0000305" key="2"/>
<sequence length="347" mass="38307">MEEQLIPIQWKDDALVLLDQTLLPNEVVYESFNTAEGVWDAIQVMKVRGAPAIGVSAAYGVYLGVKEFVESTEAEFIDEVKRVCAYLATSRPTAVNLFWALERMESVATDHTHLSITQLKDRLLEEAKEIHREDEEINRQIGEHALTLFHDGMGVLTHCNAGALATTKYGTATAPMYLAKEKGWDLKIYSDETRPRLQGSTLTALELQRAGIDVTVITDNMAAMVMSQGKIDAVIVGCDRVAANGDVANKIGTLGVSILAKYYNIPFYVAAPTPTIDLKTPTGKEIPIEERDASEVINRFGQYSAPKESKVYNPAFDVTPHENVTAIITEKGIVKAPFTENLKKLFQ</sequence>
<dbReference type="EC" id="5.3.1.-" evidence="1"/>
<dbReference type="EMBL" id="CP000485">
    <property type="protein sequence ID" value="ABK83739.1"/>
    <property type="status" value="ALT_INIT"/>
    <property type="molecule type" value="Genomic_DNA"/>
</dbReference>
<dbReference type="SMR" id="A0R946"/>
<dbReference type="KEGG" id="btl:BALH_0338"/>
<dbReference type="HOGENOM" id="CLU_016218_1_2_9"/>
<dbReference type="GO" id="GO:0046523">
    <property type="term" value="F:S-methyl-5-thioribose-1-phosphate isomerase activity"/>
    <property type="evidence" value="ECO:0007669"/>
    <property type="project" value="InterPro"/>
</dbReference>
<dbReference type="GO" id="GO:0019509">
    <property type="term" value="P:L-methionine salvage from methylthioadenosine"/>
    <property type="evidence" value="ECO:0007669"/>
    <property type="project" value="TreeGrafter"/>
</dbReference>
<dbReference type="GO" id="GO:0019323">
    <property type="term" value="P:pentose catabolic process"/>
    <property type="evidence" value="ECO:0007669"/>
    <property type="project" value="UniProtKB-UniRule"/>
</dbReference>
<dbReference type="FunFam" id="1.20.120.420:FF:000001">
    <property type="entry name" value="Methylthioribose-1-phosphate isomerase"/>
    <property type="match status" value="1"/>
</dbReference>
<dbReference type="FunFam" id="3.40.50.10470:FF:000006">
    <property type="entry name" value="Methylthioribose-1-phosphate isomerase"/>
    <property type="match status" value="1"/>
</dbReference>
<dbReference type="Gene3D" id="1.20.120.420">
    <property type="entry name" value="translation initiation factor eif-2b, domain 1"/>
    <property type="match status" value="1"/>
</dbReference>
<dbReference type="Gene3D" id="3.40.50.10470">
    <property type="entry name" value="Translation initiation factor eif-2b, domain 2"/>
    <property type="match status" value="1"/>
</dbReference>
<dbReference type="HAMAP" id="MF_02229">
    <property type="entry name" value="Deoxyribose1P_isomerase"/>
    <property type="match status" value="1"/>
</dbReference>
<dbReference type="HAMAP" id="MF_01678">
    <property type="entry name" value="Salvage_MtnA"/>
    <property type="match status" value="1"/>
</dbReference>
<dbReference type="InterPro" id="IPR043679">
    <property type="entry name" value="Deoxyribose1P_isomerase_DrdI"/>
</dbReference>
<dbReference type="InterPro" id="IPR000649">
    <property type="entry name" value="IF-2B-related"/>
</dbReference>
<dbReference type="InterPro" id="IPR005251">
    <property type="entry name" value="IF-M1Pi"/>
</dbReference>
<dbReference type="InterPro" id="IPR042529">
    <property type="entry name" value="IF_2B-like_C"/>
</dbReference>
<dbReference type="InterPro" id="IPR011559">
    <property type="entry name" value="Initiation_fac_2B_a/b/d"/>
</dbReference>
<dbReference type="InterPro" id="IPR027363">
    <property type="entry name" value="M1Pi_N"/>
</dbReference>
<dbReference type="InterPro" id="IPR037171">
    <property type="entry name" value="NagB/RpiA_transferase-like"/>
</dbReference>
<dbReference type="NCBIfam" id="TIGR00524">
    <property type="entry name" value="eIF-2B_rel"/>
    <property type="match status" value="1"/>
</dbReference>
<dbReference type="NCBIfam" id="NF004326">
    <property type="entry name" value="PRK05720.1"/>
    <property type="match status" value="1"/>
</dbReference>
<dbReference type="NCBIfam" id="TIGR00512">
    <property type="entry name" value="salvage_mtnA"/>
    <property type="match status" value="1"/>
</dbReference>
<dbReference type="PANTHER" id="PTHR43475">
    <property type="entry name" value="METHYLTHIORIBOSE-1-PHOSPHATE ISOMERASE"/>
    <property type="match status" value="1"/>
</dbReference>
<dbReference type="PANTHER" id="PTHR43475:SF1">
    <property type="entry name" value="METHYLTHIORIBOSE-1-PHOSPHATE ISOMERASE"/>
    <property type="match status" value="1"/>
</dbReference>
<dbReference type="Pfam" id="PF01008">
    <property type="entry name" value="IF-2B"/>
    <property type="match status" value="1"/>
</dbReference>
<dbReference type="SUPFAM" id="SSF100950">
    <property type="entry name" value="NagB/RpiA/CoA transferase-like"/>
    <property type="match status" value="1"/>
</dbReference>
<reference key="1">
    <citation type="journal article" date="2007" name="J. Bacteriol.">
        <title>The complete genome sequence of Bacillus thuringiensis Al Hakam.</title>
        <authorList>
            <person name="Challacombe J.F."/>
            <person name="Altherr M.R."/>
            <person name="Xie G."/>
            <person name="Bhotika S.S."/>
            <person name="Brown N."/>
            <person name="Bruce D."/>
            <person name="Campbell C.S."/>
            <person name="Campbell M.L."/>
            <person name="Chen J."/>
            <person name="Chertkov O."/>
            <person name="Cleland C."/>
            <person name="Dimitrijevic M."/>
            <person name="Doggett N.A."/>
            <person name="Fawcett J.J."/>
            <person name="Glavina T."/>
            <person name="Goodwin L.A."/>
            <person name="Green L.D."/>
            <person name="Han C.S."/>
            <person name="Hill K.K."/>
            <person name="Hitchcock P."/>
            <person name="Jackson P.J."/>
            <person name="Keim P."/>
            <person name="Kewalramani A.R."/>
            <person name="Longmire J."/>
            <person name="Lucas S."/>
            <person name="Malfatti S."/>
            <person name="Martinez D."/>
            <person name="McMurry K."/>
            <person name="Meincke L.J."/>
            <person name="Misra M."/>
            <person name="Moseman B.L."/>
            <person name="Mundt M."/>
            <person name="Munk A.C."/>
            <person name="Okinaka R.T."/>
            <person name="Parson-Quintana B."/>
            <person name="Reilly L.P."/>
            <person name="Richardson P."/>
            <person name="Robinson D.L."/>
            <person name="Saunders E."/>
            <person name="Tapia R."/>
            <person name="Tesmer J.G."/>
            <person name="Thayer N."/>
            <person name="Thompson L.S."/>
            <person name="Tice H."/>
            <person name="Ticknor L.O."/>
            <person name="Wills P.L."/>
            <person name="Gilna P."/>
            <person name="Brettin T.S."/>
        </authorList>
    </citation>
    <scope>NUCLEOTIDE SEQUENCE [LARGE SCALE GENOMIC DNA]</scope>
    <source>
        <strain>Al Hakam</strain>
    </source>
</reference>
<comment type="function">
    <text evidence="1">Catalyzes the isomerization of 5-deoxy-alpha-D-ribose 1-phosphate to 5-deoxy-D-ribulose 1-phosphate, as part of a 5-deoxyribose salvage pathway that recycles this toxic radical SAM enzyme by-product to mainstream metabolites.</text>
</comment>
<comment type="catalytic activity">
    <reaction evidence="1">
        <text>5-deoxy-alpha-D-ribose 1-phosphate = 5-deoxy-D-ribulose 1-phosphate</text>
        <dbReference type="Rhea" id="RHEA:61296"/>
        <dbReference type="ChEBI" id="CHEBI:58749"/>
        <dbReference type="ChEBI" id="CHEBI:144504"/>
    </reaction>
    <physiologicalReaction direction="left-to-right" evidence="1">
        <dbReference type="Rhea" id="RHEA:61297"/>
    </physiologicalReaction>
</comment>
<comment type="pathway">
    <text evidence="1">Carbohydrate degradation.</text>
</comment>
<comment type="similarity">
    <text evidence="1">Belongs to the EIF-2B alpha/beta/delta subunits family. DrdI subfamily.</text>
</comment>
<comment type="sequence caution" evidence="2">
    <conflict type="erroneous initiation">
        <sequence resource="EMBL-CDS" id="ABK83739"/>
    </conflict>
</comment>
<accession>A0R946</accession>